<keyword id="KW-0131">Cell cycle</keyword>
<keyword id="KW-0132">Cell division</keyword>
<keyword id="KW-0133">Cell shape</keyword>
<keyword id="KW-0961">Cell wall biogenesis/degradation</keyword>
<keyword id="KW-0963">Cytoplasm</keyword>
<keyword id="KW-0573">Peptidoglycan synthesis</keyword>
<keyword id="KW-0670">Pyruvate</keyword>
<keyword id="KW-0808">Transferase</keyword>
<reference key="1">
    <citation type="journal article" date="2007" name="J. Bacteriol.">
        <title>Complete genome sequence of Haemophilus somnus (Histophilus somni) strain 129Pt and comparison to Haemophilus ducreyi 35000HP and Haemophilus influenzae Rd.</title>
        <authorList>
            <person name="Challacombe J.F."/>
            <person name="Duncan A.J."/>
            <person name="Brettin T.S."/>
            <person name="Bruce D."/>
            <person name="Chertkov O."/>
            <person name="Detter J.C."/>
            <person name="Han C.S."/>
            <person name="Misra M."/>
            <person name="Richardson P."/>
            <person name="Tapia R."/>
            <person name="Thayer N."/>
            <person name="Xie G."/>
            <person name="Inzana T.J."/>
        </authorList>
    </citation>
    <scope>NUCLEOTIDE SEQUENCE [LARGE SCALE GENOMIC DNA]</scope>
    <source>
        <strain>129Pt</strain>
    </source>
</reference>
<feature type="chain" id="PRO_1000023040" description="UDP-N-acetylglucosamine 1-carboxyvinyltransferase">
    <location>
        <begin position="1"/>
        <end position="424"/>
    </location>
</feature>
<feature type="active site" description="Proton donor" evidence="1">
    <location>
        <position position="117"/>
    </location>
</feature>
<feature type="binding site" evidence="1">
    <location>
        <begin position="22"/>
        <end position="23"/>
    </location>
    <ligand>
        <name>phosphoenolpyruvate</name>
        <dbReference type="ChEBI" id="CHEBI:58702"/>
    </ligand>
</feature>
<feature type="binding site" evidence="1">
    <location>
        <position position="93"/>
    </location>
    <ligand>
        <name>UDP-N-acetyl-alpha-D-glucosamine</name>
        <dbReference type="ChEBI" id="CHEBI:57705"/>
    </ligand>
</feature>
<feature type="binding site" evidence="1">
    <location>
        <begin position="122"/>
        <end position="126"/>
    </location>
    <ligand>
        <name>UDP-N-acetyl-alpha-D-glucosamine</name>
        <dbReference type="ChEBI" id="CHEBI:57705"/>
    </ligand>
</feature>
<feature type="binding site" evidence="1">
    <location>
        <begin position="162"/>
        <end position="165"/>
    </location>
    <ligand>
        <name>UDP-N-acetyl-alpha-D-glucosamine</name>
        <dbReference type="ChEBI" id="CHEBI:57705"/>
    </ligand>
</feature>
<feature type="binding site" evidence="1">
    <location>
        <position position="307"/>
    </location>
    <ligand>
        <name>UDP-N-acetyl-alpha-D-glucosamine</name>
        <dbReference type="ChEBI" id="CHEBI:57705"/>
    </ligand>
</feature>
<feature type="binding site" evidence="1">
    <location>
        <position position="329"/>
    </location>
    <ligand>
        <name>UDP-N-acetyl-alpha-D-glucosamine</name>
        <dbReference type="ChEBI" id="CHEBI:57705"/>
    </ligand>
</feature>
<feature type="modified residue" description="2-(S-cysteinyl)pyruvic acid O-phosphothioketal" evidence="1">
    <location>
        <position position="117"/>
    </location>
</feature>
<accession>Q0I3X9</accession>
<sequence>MQKFRVYGQSRLNGEVNISGAKNAALPILFAAILAEEPVKLTNVPELKDIDTTLKILQQLGVVTYRDEQGAVHLDASNINHFVAPYELVKTMRASIWALAPLVSRFKQGQVSLPGGCSIGARPVDLHISGLERLGAKIVLEEGYVKAFVDGQLIGKRIVIEKVSVGATLSIMIAATLAKGITVIENAAREPEITDTAVFLNKMGAKISGAGSDIITIEGVERLGGCEHSIVPDRIETGTFLVAAAISGGRIICKNTKASTLDAVIDKLRDAGAKIEVTENTITLDMQGNRPKAVNIRTEPYPGFPTDMQAQFTLLNMVAEGSSKITETIFENRFMHIPELIRMGGKAEIEGNTAFCHGVEYLSGAEVMATDLRASISLVLAGCIATGETIVDRIYHIDRGYEHIEKKLRGLGAKIERFTEKIVD</sequence>
<name>MURA_HISS1</name>
<gene>
    <name evidence="1" type="primary">murA</name>
    <name type="ordered locus">HS_1167</name>
</gene>
<dbReference type="EC" id="2.5.1.7" evidence="1"/>
<dbReference type="EMBL" id="CP000436">
    <property type="protein sequence ID" value="ABI25442.1"/>
    <property type="molecule type" value="Genomic_DNA"/>
</dbReference>
<dbReference type="SMR" id="Q0I3X9"/>
<dbReference type="KEGG" id="hso:HS_1167"/>
<dbReference type="eggNOG" id="COG0766">
    <property type="taxonomic scope" value="Bacteria"/>
</dbReference>
<dbReference type="HOGENOM" id="CLU_027387_0_0_6"/>
<dbReference type="UniPathway" id="UPA00219"/>
<dbReference type="GO" id="GO:0005737">
    <property type="term" value="C:cytoplasm"/>
    <property type="evidence" value="ECO:0007669"/>
    <property type="project" value="UniProtKB-SubCell"/>
</dbReference>
<dbReference type="GO" id="GO:0008760">
    <property type="term" value="F:UDP-N-acetylglucosamine 1-carboxyvinyltransferase activity"/>
    <property type="evidence" value="ECO:0007669"/>
    <property type="project" value="UniProtKB-UniRule"/>
</dbReference>
<dbReference type="GO" id="GO:0051301">
    <property type="term" value="P:cell division"/>
    <property type="evidence" value="ECO:0007669"/>
    <property type="project" value="UniProtKB-KW"/>
</dbReference>
<dbReference type="GO" id="GO:0071555">
    <property type="term" value="P:cell wall organization"/>
    <property type="evidence" value="ECO:0007669"/>
    <property type="project" value="UniProtKB-KW"/>
</dbReference>
<dbReference type="GO" id="GO:0009252">
    <property type="term" value="P:peptidoglycan biosynthetic process"/>
    <property type="evidence" value="ECO:0007669"/>
    <property type="project" value="UniProtKB-UniRule"/>
</dbReference>
<dbReference type="GO" id="GO:0008360">
    <property type="term" value="P:regulation of cell shape"/>
    <property type="evidence" value="ECO:0007669"/>
    <property type="project" value="UniProtKB-KW"/>
</dbReference>
<dbReference type="GO" id="GO:0019277">
    <property type="term" value="P:UDP-N-acetylgalactosamine biosynthetic process"/>
    <property type="evidence" value="ECO:0007669"/>
    <property type="project" value="InterPro"/>
</dbReference>
<dbReference type="CDD" id="cd01555">
    <property type="entry name" value="UdpNAET"/>
    <property type="match status" value="1"/>
</dbReference>
<dbReference type="FunFam" id="3.65.10.10:FF:000002">
    <property type="entry name" value="UDP-N-acetylglucosamine 1-carboxyvinyltransferase"/>
    <property type="match status" value="1"/>
</dbReference>
<dbReference type="Gene3D" id="3.65.10.10">
    <property type="entry name" value="Enolpyruvate transferase domain"/>
    <property type="match status" value="2"/>
</dbReference>
<dbReference type="HAMAP" id="MF_00111">
    <property type="entry name" value="MurA"/>
    <property type="match status" value="1"/>
</dbReference>
<dbReference type="InterPro" id="IPR001986">
    <property type="entry name" value="Enolpyruvate_Tfrase_dom"/>
</dbReference>
<dbReference type="InterPro" id="IPR036968">
    <property type="entry name" value="Enolpyruvate_Tfrase_sf"/>
</dbReference>
<dbReference type="InterPro" id="IPR050068">
    <property type="entry name" value="MurA_subfamily"/>
</dbReference>
<dbReference type="InterPro" id="IPR013792">
    <property type="entry name" value="RNA3'P_cycl/enolpyr_Trfase_a/b"/>
</dbReference>
<dbReference type="InterPro" id="IPR005750">
    <property type="entry name" value="UDP_GlcNAc_COvinyl_MurA"/>
</dbReference>
<dbReference type="NCBIfam" id="TIGR01072">
    <property type="entry name" value="murA"/>
    <property type="match status" value="1"/>
</dbReference>
<dbReference type="NCBIfam" id="NF006873">
    <property type="entry name" value="PRK09369.1"/>
    <property type="match status" value="1"/>
</dbReference>
<dbReference type="PANTHER" id="PTHR43783">
    <property type="entry name" value="UDP-N-ACETYLGLUCOSAMINE 1-CARBOXYVINYLTRANSFERASE"/>
    <property type="match status" value="1"/>
</dbReference>
<dbReference type="PANTHER" id="PTHR43783:SF1">
    <property type="entry name" value="UDP-N-ACETYLGLUCOSAMINE 1-CARBOXYVINYLTRANSFERASE"/>
    <property type="match status" value="1"/>
</dbReference>
<dbReference type="Pfam" id="PF00275">
    <property type="entry name" value="EPSP_synthase"/>
    <property type="match status" value="1"/>
</dbReference>
<dbReference type="SUPFAM" id="SSF55205">
    <property type="entry name" value="EPT/RTPC-like"/>
    <property type="match status" value="1"/>
</dbReference>
<proteinExistence type="inferred from homology"/>
<organism>
    <name type="scientific">Histophilus somni (strain 129Pt)</name>
    <name type="common">Haemophilus somnus</name>
    <dbReference type="NCBI Taxonomy" id="205914"/>
    <lineage>
        <taxon>Bacteria</taxon>
        <taxon>Pseudomonadati</taxon>
        <taxon>Pseudomonadota</taxon>
        <taxon>Gammaproteobacteria</taxon>
        <taxon>Pasteurellales</taxon>
        <taxon>Pasteurellaceae</taxon>
        <taxon>Histophilus</taxon>
    </lineage>
</organism>
<protein>
    <recommendedName>
        <fullName evidence="1">UDP-N-acetylglucosamine 1-carboxyvinyltransferase</fullName>
        <ecNumber evidence="1">2.5.1.7</ecNumber>
    </recommendedName>
    <alternativeName>
        <fullName evidence="1">Enoylpyruvate transferase</fullName>
    </alternativeName>
    <alternativeName>
        <fullName evidence="1">UDP-N-acetylglucosamine enolpyruvyl transferase</fullName>
        <shortName evidence="1">EPT</shortName>
    </alternativeName>
</protein>
<comment type="function">
    <text evidence="1">Cell wall formation. Adds enolpyruvyl to UDP-N-acetylglucosamine.</text>
</comment>
<comment type="catalytic activity">
    <reaction evidence="1">
        <text>phosphoenolpyruvate + UDP-N-acetyl-alpha-D-glucosamine = UDP-N-acetyl-3-O-(1-carboxyvinyl)-alpha-D-glucosamine + phosphate</text>
        <dbReference type="Rhea" id="RHEA:18681"/>
        <dbReference type="ChEBI" id="CHEBI:43474"/>
        <dbReference type="ChEBI" id="CHEBI:57705"/>
        <dbReference type="ChEBI" id="CHEBI:58702"/>
        <dbReference type="ChEBI" id="CHEBI:68483"/>
        <dbReference type="EC" id="2.5.1.7"/>
    </reaction>
</comment>
<comment type="pathway">
    <text evidence="1">Cell wall biogenesis; peptidoglycan biosynthesis.</text>
</comment>
<comment type="subcellular location">
    <subcellularLocation>
        <location evidence="1">Cytoplasm</location>
    </subcellularLocation>
</comment>
<comment type="similarity">
    <text evidence="1">Belongs to the EPSP synthase family. MurA subfamily.</text>
</comment>
<evidence type="ECO:0000255" key="1">
    <source>
        <dbReference type="HAMAP-Rule" id="MF_00111"/>
    </source>
</evidence>